<name>PSD12_BOVIN</name>
<keyword id="KW-0007">Acetylation</keyword>
<keyword id="KW-1017">Isopeptide bond</keyword>
<keyword id="KW-0647">Proteasome</keyword>
<keyword id="KW-1185">Reference proteome</keyword>
<keyword id="KW-0832">Ubl conjugation</keyword>
<dbReference type="EMBL" id="BC105555">
    <property type="protein sequence ID" value="AAI05556.1"/>
    <property type="molecule type" value="mRNA"/>
</dbReference>
<dbReference type="RefSeq" id="NP_001039893.1">
    <property type="nucleotide sequence ID" value="NM_001046428.1"/>
</dbReference>
<dbReference type="SMR" id="Q2KJ25"/>
<dbReference type="FunCoup" id="Q2KJ25">
    <property type="interactions" value="4146"/>
</dbReference>
<dbReference type="IntAct" id="Q2KJ25">
    <property type="interactions" value="1"/>
</dbReference>
<dbReference type="STRING" id="9913.ENSBTAP00000003145"/>
<dbReference type="PaxDb" id="9913-ENSBTAP00000003145"/>
<dbReference type="PeptideAtlas" id="Q2KJ25"/>
<dbReference type="GeneID" id="538204"/>
<dbReference type="KEGG" id="bta:538204"/>
<dbReference type="CTD" id="5718"/>
<dbReference type="VEuPathDB" id="HostDB:ENSBTAG00000002423"/>
<dbReference type="eggNOG" id="KOG1498">
    <property type="taxonomic scope" value="Eukaryota"/>
</dbReference>
<dbReference type="HOGENOM" id="CLU_033860_2_0_1"/>
<dbReference type="InParanoid" id="Q2KJ25"/>
<dbReference type="OMA" id="AENEMFK"/>
<dbReference type="OrthoDB" id="268763at2759"/>
<dbReference type="TreeFam" id="TF105721"/>
<dbReference type="Reactome" id="R-BTA-1169091">
    <property type="pathway name" value="Activation of NF-kappaB in B cells"/>
</dbReference>
<dbReference type="Reactome" id="R-BTA-1234176">
    <property type="pathway name" value="Oxygen-dependent proline hydroxylation of Hypoxia-inducible Factor Alpha"/>
</dbReference>
<dbReference type="Reactome" id="R-BTA-1236978">
    <property type="pathway name" value="Cross-presentation of soluble exogenous antigens (endosomes)"/>
</dbReference>
<dbReference type="Reactome" id="R-BTA-174084">
    <property type="pathway name" value="Autodegradation of Cdh1 by Cdh1:APC/C"/>
</dbReference>
<dbReference type="Reactome" id="R-BTA-174154">
    <property type="pathway name" value="APC/C:Cdc20 mediated degradation of Securin"/>
</dbReference>
<dbReference type="Reactome" id="R-BTA-174178">
    <property type="pathway name" value="APC/C:Cdh1 mediated degradation of Cdc20 and other APC/C:Cdh1 targeted proteins in late mitosis/early G1"/>
</dbReference>
<dbReference type="Reactome" id="R-BTA-174184">
    <property type="pathway name" value="Cdc20:Phospho-APC/C mediated degradation of Cyclin A"/>
</dbReference>
<dbReference type="Reactome" id="R-BTA-187577">
    <property type="pathway name" value="SCF(Skp2)-mediated degradation of p27/p21"/>
</dbReference>
<dbReference type="Reactome" id="R-BTA-195253">
    <property type="pathway name" value="Degradation of beta-catenin by the destruction complex"/>
</dbReference>
<dbReference type="Reactome" id="R-BTA-202424">
    <property type="pathway name" value="Downstream TCR signaling"/>
</dbReference>
<dbReference type="Reactome" id="R-BTA-2467813">
    <property type="pathway name" value="Separation of Sister Chromatids"/>
</dbReference>
<dbReference type="Reactome" id="R-BTA-2871837">
    <property type="pathway name" value="FCERI mediated NF-kB activation"/>
</dbReference>
<dbReference type="Reactome" id="R-BTA-349425">
    <property type="pathway name" value="Autodegradation of the E3 ubiquitin ligase COP1"/>
</dbReference>
<dbReference type="Reactome" id="R-BTA-350562">
    <property type="pathway name" value="Regulation of ornithine decarboxylase (ODC)"/>
</dbReference>
<dbReference type="Reactome" id="R-BTA-382556">
    <property type="pathway name" value="ABC-family proteins mediated transport"/>
</dbReference>
<dbReference type="Reactome" id="R-BTA-450408">
    <property type="pathway name" value="AUF1 (hnRNP D0) binds and destabilizes mRNA"/>
</dbReference>
<dbReference type="Reactome" id="R-BTA-4608870">
    <property type="pathway name" value="Asymmetric localization of PCP proteins"/>
</dbReference>
<dbReference type="Reactome" id="R-BTA-4641257">
    <property type="pathway name" value="Degradation of AXIN"/>
</dbReference>
<dbReference type="Reactome" id="R-BTA-4641258">
    <property type="pathway name" value="Degradation of DVL"/>
</dbReference>
<dbReference type="Reactome" id="R-BTA-5358346">
    <property type="pathway name" value="Hedgehog ligand biogenesis"/>
</dbReference>
<dbReference type="Reactome" id="R-BTA-5607761">
    <property type="pathway name" value="Dectin-1 mediated noncanonical NF-kB signaling"/>
</dbReference>
<dbReference type="Reactome" id="R-BTA-5607764">
    <property type="pathway name" value="CLEC7A (Dectin-1) signaling"/>
</dbReference>
<dbReference type="Reactome" id="R-BTA-5610780">
    <property type="pathway name" value="Degradation of GLI1 by the proteasome"/>
</dbReference>
<dbReference type="Reactome" id="R-BTA-5610785">
    <property type="pathway name" value="GLI3 is processed to GLI3R by the proteasome"/>
</dbReference>
<dbReference type="Reactome" id="R-BTA-5632684">
    <property type="pathway name" value="Hedgehog 'on' state"/>
</dbReference>
<dbReference type="Reactome" id="R-BTA-5668541">
    <property type="pathway name" value="TNFR2 non-canonical NF-kB pathway"/>
</dbReference>
<dbReference type="Reactome" id="R-BTA-5676590">
    <property type="pathway name" value="NIK--&gt;noncanonical NF-kB signaling"/>
</dbReference>
<dbReference type="Reactome" id="R-BTA-5687128">
    <property type="pathway name" value="MAPK6/MAPK4 signaling"/>
</dbReference>
<dbReference type="Reactome" id="R-BTA-5689603">
    <property type="pathway name" value="UCH proteinases"/>
</dbReference>
<dbReference type="Reactome" id="R-BTA-5689880">
    <property type="pathway name" value="Ub-specific processing proteases"/>
</dbReference>
<dbReference type="Reactome" id="R-BTA-6798695">
    <property type="pathway name" value="Neutrophil degranulation"/>
</dbReference>
<dbReference type="Reactome" id="R-BTA-68867">
    <property type="pathway name" value="Assembly of the pre-replicative complex"/>
</dbReference>
<dbReference type="Reactome" id="R-BTA-68949">
    <property type="pathway name" value="Orc1 removal from chromatin"/>
</dbReference>
<dbReference type="Reactome" id="R-BTA-69017">
    <property type="pathway name" value="CDK-mediated phosphorylation and removal of Cdc6"/>
</dbReference>
<dbReference type="Reactome" id="R-BTA-69481">
    <property type="pathway name" value="G2/M Checkpoints"/>
</dbReference>
<dbReference type="Reactome" id="R-BTA-69601">
    <property type="pathway name" value="Ubiquitin Mediated Degradation of Phosphorylated Cdc25A"/>
</dbReference>
<dbReference type="Reactome" id="R-BTA-75815">
    <property type="pathway name" value="Ubiquitin-dependent degradation of Cyclin D"/>
</dbReference>
<dbReference type="Reactome" id="R-BTA-8852276">
    <property type="pathway name" value="The role of GTSE1 in G2/M progression after G2 checkpoint"/>
</dbReference>
<dbReference type="Reactome" id="R-BTA-8854050">
    <property type="pathway name" value="FBXL7 down-regulates AURKA during mitotic entry and in early mitosis"/>
</dbReference>
<dbReference type="Reactome" id="R-BTA-8939236">
    <property type="pathway name" value="RUNX1 regulates transcription of genes involved in differentiation of HSCs"/>
</dbReference>
<dbReference type="Reactome" id="R-BTA-8939902">
    <property type="pathway name" value="Regulation of RUNX2 expression and activity"/>
</dbReference>
<dbReference type="Reactome" id="R-BTA-8941858">
    <property type="pathway name" value="Regulation of RUNX3 expression and activity"/>
</dbReference>
<dbReference type="Reactome" id="R-BTA-8948751">
    <property type="pathway name" value="Regulation of PTEN stability and activity"/>
</dbReference>
<dbReference type="Reactome" id="R-BTA-8951664">
    <property type="pathway name" value="Neddylation"/>
</dbReference>
<dbReference type="Reactome" id="R-BTA-9020702">
    <property type="pathway name" value="Interleukin-1 signaling"/>
</dbReference>
<dbReference type="Reactome" id="R-BTA-9755511">
    <property type="pathway name" value="KEAP1-NFE2L2 pathway"/>
</dbReference>
<dbReference type="Reactome" id="R-BTA-9762114">
    <property type="pathway name" value="GSK3B and BTRC:CUL1-mediated-degradation of NFE2L2"/>
</dbReference>
<dbReference type="Reactome" id="R-BTA-983168">
    <property type="pathway name" value="Antigen processing: Ubiquitination &amp; Proteasome degradation"/>
</dbReference>
<dbReference type="Reactome" id="R-BTA-9907900">
    <property type="pathway name" value="Proteasome assembly"/>
</dbReference>
<dbReference type="Proteomes" id="UP000009136">
    <property type="component" value="Chromosome 19"/>
</dbReference>
<dbReference type="Bgee" id="ENSBTAG00000002423">
    <property type="expression patterns" value="Expressed in oocyte and 103 other cell types or tissues"/>
</dbReference>
<dbReference type="GO" id="GO:0005737">
    <property type="term" value="C:cytoplasm"/>
    <property type="evidence" value="ECO:0000318"/>
    <property type="project" value="GO_Central"/>
</dbReference>
<dbReference type="GO" id="GO:0005829">
    <property type="term" value="C:cytosol"/>
    <property type="evidence" value="ECO:0000304"/>
    <property type="project" value="Reactome"/>
</dbReference>
<dbReference type="GO" id="GO:0022624">
    <property type="term" value="C:proteasome accessory complex"/>
    <property type="evidence" value="ECO:0000250"/>
    <property type="project" value="UniProtKB"/>
</dbReference>
<dbReference type="GO" id="GO:0008541">
    <property type="term" value="C:proteasome regulatory particle, lid subcomplex"/>
    <property type="evidence" value="ECO:0000318"/>
    <property type="project" value="GO_Central"/>
</dbReference>
<dbReference type="FunFam" id="1.10.10.10:FF:000159">
    <property type="entry name" value="26S proteasome non-ATPase regulatory subunit 12"/>
    <property type="match status" value="1"/>
</dbReference>
<dbReference type="Gene3D" id="1.10.10.10">
    <property type="entry name" value="Winged helix-like DNA-binding domain superfamily/Winged helix DNA-binding domain"/>
    <property type="match status" value="1"/>
</dbReference>
<dbReference type="InterPro" id="IPR000717">
    <property type="entry name" value="PCI_dom"/>
</dbReference>
<dbReference type="InterPro" id="IPR054559">
    <property type="entry name" value="PSMD12-CSN4-like_N"/>
</dbReference>
<dbReference type="InterPro" id="IPR040134">
    <property type="entry name" value="PSMD12/CSN4"/>
</dbReference>
<dbReference type="InterPro" id="IPR040896">
    <property type="entry name" value="RPN5_C"/>
</dbReference>
<dbReference type="InterPro" id="IPR036388">
    <property type="entry name" value="WH-like_DNA-bd_sf"/>
</dbReference>
<dbReference type="InterPro" id="IPR036390">
    <property type="entry name" value="WH_DNA-bd_sf"/>
</dbReference>
<dbReference type="PANTHER" id="PTHR10855:SF1">
    <property type="entry name" value="26S PROTEASOME NON-ATPASE REGULATORY SUBUNIT 12"/>
    <property type="match status" value="1"/>
</dbReference>
<dbReference type="PANTHER" id="PTHR10855">
    <property type="entry name" value="26S PROTEASOME NON-ATPASE REGULATORY SUBUNIT 12/COP9 SIGNALOSOME COMPLEX SUBUNIT 4"/>
    <property type="match status" value="1"/>
</dbReference>
<dbReference type="Pfam" id="PF01399">
    <property type="entry name" value="PCI"/>
    <property type="match status" value="1"/>
</dbReference>
<dbReference type="Pfam" id="PF22241">
    <property type="entry name" value="PSMD12-CSN4_N"/>
    <property type="match status" value="1"/>
</dbReference>
<dbReference type="Pfam" id="PF18098">
    <property type="entry name" value="RPN5_C"/>
    <property type="match status" value="1"/>
</dbReference>
<dbReference type="SMART" id="SM00088">
    <property type="entry name" value="PINT"/>
    <property type="match status" value="1"/>
</dbReference>
<dbReference type="SUPFAM" id="SSF46785">
    <property type="entry name" value="Winged helix' DNA-binding domain"/>
    <property type="match status" value="1"/>
</dbReference>
<dbReference type="PROSITE" id="PS50250">
    <property type="entry name" value="PCI"/>
    <property type="match status" value="1"/>
</dbReference>
<organism>
    <name type="scientific">Bos taurus</name>
    <name type="common">Bovine</name>
    <dbReference type="NCBI Taxonomy" id="9913"/>
    <lineage>
        <taxon>Eukaryota</taxon>
        <taxon>Metazoa</taxon>
        <taxon>Chordata</taxon>
        <taxon>Craniata</taxon>
        <taxon>Vertebrata</taxon>
        <taxon>Euteleostomi</taxon>
        <taxon>Mammalia</taxon>
        <taxon>Eutheria</taxon>
        <taxon>Laurasiatheria</taxon>
        <taxon>Artiodactyla</taxon>
        <taxon>Ruminantia</taxon>
        <taxon>Pecora</taxon>
        <taxon>Bovidae</taxon>
        <taxon>Bovinae</taxon>
        <taxon>Bos</taxon>
    </lineage>
</organism>
<feature type="initiator methionine" description="Removed" evidence="1">
    <location>
        <position position="1"/>
    </location>
</feature>
<feature type="chain" id="PRO_0000244600" description="26S proteasome non-ATPase regulatory subunit 12">
    <location>
        <begin position="2"/>
        <end position="456"/>
    </location>
</feature>
<feature type="domain" description="PCI" evidence="2">
    <location>
        <begin position="242"/>
        <end position="420"/>
    </location>
</feature>
<feature type="modified residue" description="N-acetylalanine" evidence="1">
    <location>
        <position position="2"/>
    </location>
</feature>
<feature type="modified residue" description="N6-acetyllysine" evidence="1">
    <location>
        <position position="221"/>
    </location>
</feature>
<feature type="modified residue" description="N6-acetyllysine" evidence="1">
    <location>
        <position position="368"/>
    </location>
</feature>
<feature type="cross-link" description="Glycyl lysine isopeptide (Lys-Gly) (interchain with G-Cter in SUMO1); alternate" evidence="1">
    <location>
        <position position="92"/>
    </location>
</feature>
<feature type="cross-link" description="Glycyl lysine isopeptide (Lys-Gly) (interchain with G-Cter in SUMO2); alternate" evidence="1">
    <location>
        <position position="92"/>
    </location>
</feature>
<accession>Q2KJ25</accession>
<reference key="1">
    <citation type="submission" date="2005-09" db="EMBL/GenBank/DDBJ databases">
        <authorList>
            <consortium name="NIH - Mammalian Gene Collection (MGC) project"/>
        </authorList>
    </citation>
    <scope>NUCLEOTIDE SEQUENCE [LARGE SCALE MRNA]</scope>
    <source>
        <strain>Hereford</strain>
        <tissue>Ascending colon</tissue>
    </source>
</reference>
<gene>
    <name type="primary">PSMD12</name>
</gene>
<comment type="function">
    <text evidence="1">Component of the 26S proteasome, a multiprotein complex involved in the ATP-dependent degradation of ubiquitinated proteins. This complex plays a key role in the maintenance of protein homeostasis by removing misfolded or damaged proteins, which could impair cellular functions, and by removing proteins whose functions are no longer required. Therefore, the proteasome participates in numerous cellular processes, including cell cycle progression, apoptosis, or DNA damage repair.</text>
</comment>
<comment type="subunit">
    <text evidence="1">Component of the 19S proteasome regulatory particle complex (By similarity). The 26S proteasome consists of a 20S core particle (CP) and two 19S regulatory subunits (RP) (By similarity). The regulatory particle is made of a lid composed of 9 subunits including PSMD12, a base containing 6 ATPases and few additional components (By similarity). Interacts with ERCC6 (By similarity).</text>
</comment>
<comment type="similarity">
    <text evidence="3">Belongs to the proteasome subunit p55 family.</text>
</comment>
<sequence>MADGGSERADGRIVKMEVDYSATVDQRLPECEKLAKEGRLQEVIETLLSLEKQTRTASDMVSTSRILVAIVKMCYEAKEWDLLNENIMLLSKRRSQLKQAVAKMVQQCCTYVEEITDLPIKLRLIDTLRMVTEGKIYVEIERARLTKTLATIKEQNGDVKEAASILQELQVETYGSMEKKERVEFILEQMRLCLAVKDYIRTQIISKKINTKFFQEENTEKLKLKYYNLMIQLDQHEGSYLSICKHYRAIYDTPCIQAESEKWQQALKSVVLYVILAPFDNEQSDLVHRISGDKKLEEIPKYKDLLKLFTTMELMRWSTLVEDYGMELRKGSLESPATDVFGYTEEGEKRWKDLKNRVVEHNIRIMAKYYTRITMKRMAQLLDLSVDESEAFLSNLVVNKTIFAKVDRLAGIINFQRPKDPNNLLNDWSQKLNSLMSLVNKTTHLIAKEEMIHNLQ</sequence>
<evidence type="ECO:0000250" key="1">
    <source>
        <dbReference type="UniProtKB" id="O00232"/>
    </source>
</evidence>
<evidence type="ECO:0000255" key="2">
    <source>
        <dbReference type="PROSITE-ProRule" id="PRU01185"/>
    </source>
</evidence>
<evidence type="ECO:0000305" key="3"/>
<protein>
    <recommendedName>
        <fullName>26S proteasome non-ATPase regulatory subunit 12</fullName>
    </recommendedName>
    <alternativeName>
        <fullName>26S proteasome regulatory subunit RPN5</fullName>
    </alternativeName>
</protein>
<proteinExistence type="evidence at transcript level"/>